<name>HISX_PSEPF</name>
<organism>
    <name type="scientific">Pseudomonas fluorescens (strain Pf0-1)</name>
    <dbReference type="NCBI Taxonomy" id="205922"/>
    <lineage>
        <taxon>Bacteria</taxon>
        <taxon>Pseudomonadati</taxon>
        <taxon>Pseudomonadota</taxon>
        <taxon>Gammaproteobacteria</taxon>
        <taxon>Pseudomonadales</taxon>
        <taxon>Pseudomonadaceae</taxon>
        <taxon>Pseudomonas</taxon>
    </lineage>
</organism>
<accession>Q3KHZ2</accession>
<reference key="1">
    <citation type="journal article" date="2009" name="Genome Biol.">
        <title>Genomic and genetic analyses of diversity and plant interactions of Pseudomonas fluorescens.</title>
        <authorList>
            <person name="Silby M.W."/>
            <person name="Cerdeno-Tarraga A.M."/>
            <person name="Vernikos G.S."/>
            <person name="Giddens S.R."/>
            <person name="Jackson R.W."/>
            <person name="Preston G.M."/>
            <person name="Zhang X.-X."/>
            <person name="Moon C.D."/>
            <person name="Gehrig S.M."/>
            <person name="Godfrey S.A.C."/>
            <person name="Knight C.G."/>
            <person name="Malone J.G."/>
            <person name="Robinson Z."/>
            <person name="Spiers A.J."/>
            <person name="Harris S."/>
            <person name="Challis G.L."/>
            <person name="Yaxley A.M."/>
            <person name="Harris D."/>
            <person name="Seeger K."/>
            <person name="Murphy L."/>
            <person name="Rutter S."/>
            <person name="Squares R."/>
            <person name="Quail M.A."/>
            <person name="Saunders E."/>
            <person name="Mavromatis K."/>
            <person name="Brettin T.S."/>
            <person name="Bentley S.D."/>
            <person name="Hothersall J."/>
            <person name="Stephens E."/>
            <person name="Thomas C.M."/>
            <person name="Parkhill J."/>
            <person name="Levy S.B."/>
            <person name="Rainey P.B."/>
            <person name="Thomson N.R."/>
        </authorList>
    </citation>
    <scope>NUCLEOTIDE SEQUENCE [LARGE SCALE GENOMIC DNA]</scope>
    <source>
        <strain>Pf0-1</strain>
    </source>
</reference>
<evidence type="ECO:0000255" key="1">
    <source>
        <dbReference type="HAMAP-Rule" id="MF_01024"/>
    </source>
</evidence>
<proteinExistence type="inferred from homology"/>
<sequence length="441" mass="47306">MTAPTAIRRLNAADPDFAHHLDHLLSWESVSDDSVNQRVLDIIKAVRERGDAALVEFTQKFDGLEVASMADLILPRERLELALTRITVAQREALEKAAARVRSYHEKQKQDSWSYTEADGTVLGQKVTPLDRAGLYVPGGKASYPSSVLMNAIPAKVAGVTEVVMVVPTPRGEVNELVLAAACIAGVDRVFTIGGAQAVAALAYGTESVPQVDKVVGPGNIYVATAKRHVFGQVGIDMIAGPSEILVVCDGQTDPDWIAMDLFSQAEHDEDAQAILVSPDAEFLDKVAASIDKLLPTMDRATIIETSINGRGALIHVRDMAQAIEVANRIAPEHLELSVADPQAWLPQIRHAGAIFMGRHTSEALGDYCAGPNHVLPTSGTARFSSPLGVYDFQKRSSIIFCSEAGASELGKTASILARGESLSAHARSAEYRIKDDVKGN</sequence>
<comment type="function">
    <text evidence="1">Catalyzes the sequential NAD-dependent oxidations of L-histidinol to L-histidinaldehyde and then to L-histidine.</text>
</comment>
<comment type="catalytic activity">
    <reaction evidence="1">
        <text>L-histidinol + 2 NAD(+) + H2O = L-histidine + 2 NADH + 3 H(+)</text>
        <dbReference type="Rhea" id="RHEA:20641"/>
        <dbReference type="ChEBI" id="CHEBI:15377"/>
        <dbReference type="ChEBI" id="CHEBI:15378"/>
        <dbReference type="ChEBI" id="CHEBI:57540"/>
        <dbReference type="ChEBI" id="CHEBI:57595"/>
        <dbReference type="ChEBI" id="CHEBI:57699"/>
        <dbReference type="ChEBI" id="CHEBI:57945"/>
        <dbReference type="EC" id="1.1.1.23"/>
    </reaction>
</comment>
<comment type="cofactor">
    <cofactor evidence="1">
        <name>Zn(2+)</name>
        <dbReference type="ChEBI" id="CHEBI:29105"/>
    </cofactor>
    <text evidence="1">Binds 1 zinc ion per subunit.</text>
</comment>
<comment type="pathway">
    <text evidence="1">Amino-acid biosynthesis; L-histidine biosynthesis; L-histidine from 5-phospho-alpha-D-ribose 1-diphosphate: step 9/9.</text>
</comment>
<comment type="similarity">
    <text evidence="1">Belongs to the histidinol dehydrogenase family.</text>
</comment>
<protein>
    <recommendedName>
        <fullName evidence="1">Histidinol dehydrogenase</fullName>
        <shortName evidence="1">HDH</shortName>
        <ecNumber evidence="1">1.1.1.23</ecNumber>
    </recommendedName>
</protein>
<keyword id="KW-0028">Amino-acid biosynthesis</keyword>
<keyword id="KW-0368">Histidine biosynthesis</keyword>
<keyword id="KW-0479">Metal-binding</keyword>
<keyword id="KW-0520">NAD</keyword>
<keyword id="KW-0560">Oxidoreductase</keyword>
<keyword id="KW-0862">Zinc</keyword>
<feature type="chain" id="PRO_0000229862" description="Histidinol dehydrogenase">
    <location>
        <begin position="1"/>
        <end position="441"/>
    </location>
</feature>
<feature type="active site" description="Proton acceptor" evidence="1">
    <location>
        <position position="333"/>
    </location>
</feature>
<feature type="active site" description="Proton acceptor" evidence="1">
    <location>
        <position position="334"/>
    </location>
</feature>
<feature type="binding site" evidence="1">
    <location>
        <position position="136"/>
    </location>
    <ligand>
        <name>NAD(+)</name>
        <dbReference type="ChEBI" id="CHEBI:57540"/>
    </ligand>
</feature>
<feature type="binding site" evidence="1">
    <location>
        <position position="197"/>
    </location>
    <ligand>
        <name>NAD(+)</name>
        <dbReference type="ChEBI" id="CHEBI:57540"/>
    </ligand>
</feature>
<feature type="binding site" evidence="1">
    <location>
        <position position="220"/>
    </location>
    <ligand>
        <name>NAD(+)</name>
        <dbReference type="ChEBI" id="CHEBI:57540"/>
    </ligand>
</feature>
<feature type="binding site" evidence="1">
    <location>
        <position position="243"/>
    </location>
    <ligand>
        <name>substrate</name>
    </ligand>
</feature>
<feature type="binding site" evidence="1">
    <location>
        <position position="265"/>
    </location>
    <ligand>
        <name>substrate</name>
    </ligand>
</feature>
<feature type="binding site" evidence="1">
    <location>
        <position position="265"/>
    </location>
    <ligand>
        <name>Zn(2+)</name>
        <dbReference type="ChEBI" id="CHEBI:29105"/>
    </ligand>
</feature>
<feature type="binding site" evidence="1">
    <location>
        <position position="268"/>
    </location>
    <ligand>
        <name>substrate</name>
    </ligand>
</feature>
<feature type="binding site" evidence="1">
    <location>
        <position position="268"/>
    </location>
    <ligand>
        <name>Zn(2+)</name>
        <dbReference type="ChEBI" id="CHEBI:29105"/>
    </ligand>
</feature>
<feature type="binding site" evidence="1">
    <location>
        <position position="334"/>
    </location>
    <ligand>
        <name>substrate</name>
    </ligand>
</feature>
<feature type="binding site" evidence="1">
    <location>
        <position position="367"/>
    </location>
    <ligand>
        <name>substrate</name>
    </ligand>
</feature>
<feature type="binding site" evidence="1">
    <location>
        <position position="367"/>
    </location>
    <ligand>
        <name>Zn(2+)</name>
        <dbReference type="ChEBI" id="CHEBI:29105"/>
    </ligand>
</feature>
<feature type="binding site" evidence="1">
    <location>
        <position position="421"/>
    </location>
    <ligand>
        <name>substrate</name>
    </ligand>
</feature>
<feature type="binding site" evidence="1">
    <location>
        <position position="426"/>
    </location>
    <ligand>
        <name>substrate</name>
    </ligand>
</feature>
<feature type="binding site" evidence="1">
    <location>
        <position position="426"/>
    </location>
    <ligand>
        <name>Zn(2+)</name>
        <dbReference type="ChEBI" id="CHEBI:29105"/>
    </ligand>
</feature>
<dbReference type="EC" id="1.1.1.23" evidence="1"/>
<dbReference type="EMBL" id="CP000094">
    <property type="protein sequence ID" value="ABA72614.1"/>
    <property type="molecule type" value="Genomic_DNA"/>
</dbReference>
<dbReference type="RefSeq" id="WP_011332480.1">
    <property type="nucleotide sequence ID" value="NC_007492.2"/>
</dbReference>
<dbReference type="SMR" id="Q3KHZ2"/>
<dbReference type="KEGG" id="pfo:Pfl01_0871"/>
<dbReference type="eggNOG" id="COG0141">
    <property type="taxonomic scope" value="Bacteria"/>
</dbReference>
<dbReference type="HOGENOM" id="CLU_006732_3_3_6"/>
<dbReference type="UniPathway" id="UPA00031">
    <property type="reaction ID" value="UER00014"/>
</dbReference>
<dbReference type="Proteomes" id="UP000002704">
    <property type="component" value="Chromosome"/>
</dbReference>
<dbReference type="GO" id="GO:0005829">
    <property type="term" value="C:cytosol"/>
    <property type="evidence" value="ECO:0007669"/>
    <property type="project" value="TreeGrafter"/>
</dbReference>
<dbReference type="GO" id="GO:0004399">
    <property type="term" value="F:histidinol dehydrogenase activity"/>
    <property type="evidence" value="ECO:0007669"/>
    <property type="project" value="UniProtKB-UniRule"/>
</dbReference>
<dbReference type="GO" id="GO:0051287">
    <property type="term" value="F:NAD binding"/>
    <property type="evidence" value="ECO:0007669"/>
    <property type="project" value="InterPro"/>
</dbReference>
<dbReference type="GO" id="GO:0008270">
    <property type="term" value="F:zinc ion binding"/>
    <property type="evidence" value="ECO:0007669"/>
    <property type="project" value="UniProtKB-UniRule"/>
</dbReference>
<dbReference type="GO" id="GO:0000105">
    <property type="term" value="P:L-histidine biosynthetic process"/>
    <property type="evidence" value="ECO:0007669"/>
    <property type="project" value="UniProtKB-UniRule"/>
</dbReference>
<dbReference type="CDD" id="cd06572">
    <property type="entry name" value="Histidinol_dh"/>
    <property type="match status" value="1"/>
</dbReference>
<dbReference type="FunFam" id="3.40.50.1980:FF:000004">
    <property type="entry name" value="Histidinol dehydrogenase"/>
    <property type="match status" value="1"/>
</dbReference>
<dbReference type="FunFam" id="3.40.50.1980:FF:000010">
    <property type="entry name" value="Histidinol dehydrogenase"/>
    <property type="match status" value="1"/>
</dbReference>
<dbReference type="Gene3D" id="1.20.5.1300">
    <property type="match status" value="1"/>
</dbReference>
<dbReference type="Gene3D" id="3.40.50.1980">
    <property type="entry name" value="Nitrogenase molybdenum iron protein domain"/>
    <property type="match status" value="2"/>
</dbReference>
<dbReference type="HAMAP" id="MF_01024">
    <property type="entry name" value="HisD"/>
    <property type="match status" value="1"/>
</dbReference>
<dbReference type="InterPro" id="IPR016161">
    <property type="entry name" value="Ald_DH/histidinol_DH"/>
</dbReference>
<dbReference type="InterPro" id="IPR001692">
    <property type="entry name" value="Histidinol_DH_CS"/>
</dbReference>
<dbReference type="InterPro" id="IPR022695">
    <property type="entry name" value="Histidinol_DH_monofunct"/>
</dbReference>
<dbReference type="InterPro" id="IPR012131">
    <property type="entry name" value="Hstdl_DH"/>
</dbReference>
<dbReference type="NCBIfam" id="TIGR00069">
    <property type="entry name" value="hisD"/>
    <property type="match status" value="1"/>
</dbReference>
<dbReference type="PANTHER" id="PTHR21256:SF2">
    <property type="entry name" value="HISTIDINE BIOSYNTHESIS TRIFUNCTIONAL PROTEIN"/>
    <property type="match status" value="1"/>
</dbReference>
<dbReference type="PANTHER" id="PTHR21256">
    <property type="entry name" value="HISTIDINOL DEHYDROGENASE HDH"/>
    <property type="match status" value="1"/>
</dbReference>
<dbReference type="Pfam" id="PF00815">
    <property type="entry name" value="Histidinol_dh"/>
    <property type="match status" value="1"/>
</dbReference>
<dbReference type="PIRSF" id="PIRSF000099">
    <property type="entry name" value="Histidinol_dh"/>
    <property type="match status" value="1"/>
</dbReference>
<dbReference type="PRINTS" id="PR00083">
    <property type="entry name" value="HOLDHDRGNASE"/>
</dbReference>
<dbReference type="SUPFAM" id="SSF53720">
    <property type="entry name" value="ALDH-like"/>
    <property type="match status" value="1"/>
</dbReference>
<dbReference type="PROSITE" id="PS00611">
    <property type="entry name" value="HISOL_DEHYDROGENASE"/>
    <property type="match status" value="1"/>
</dbReference>
<gene>
    <name evidence="1" type="primary">hisD</name>
    <name type="ordered locus">Pfl01_0871</name>
</gene>